<dbReference type="EMBL" id="CP000133">
    <property type="protein sequence ID" value="ABC92658.1"/>
    <property type="molecule type" value="Genomic_DNA"/>
</dbReference>
<dbReference type="SMR" id="Q2K3C8"/>
<dbReference type="KEGG" id="ret:RHE_CH03912"/>
<dbReference type="eggNOG" id="COG1872">
    <property type="taxonomic scope" value="Bacteria"/>
</dbReference>
<dbReference type="HOGENOM" id="CLU_130694_3_0_5"/>
<dbReference type="Proteomes" id="UP000001936">
    <property type="component" value="Chromosome"/>
</dbReference>
<dbReference type="Gene3D" id="3.30.1200.10">
    <property type="entry name" value="YggU-like"/>
    <property type="match status" value="1"/>
</dbReference>
<dbReference type="HAMAP" id="MF_00634">
    <property type="entry name" value="UPF0235"/>
    <property type="match status" value="1"/>
</dbReference>
<dbReference type="InterPro" id="IPR003746">
    <property type="entry name" value="DUF167"/>
</dbReference>
<dbReference type="InterPro" id="IPR036591">
    <property type="entry name" value="YggU-like_sf"/>
</dbReference>
<dbReference type="NCBIfam" id="TIGR00251">
    <property type="entry name" value="DUF167 family protein"/>
    <property type="match status" value="1"/>
</dbReference>
<dbReference type="NCBIfam" id="NF002348">
    <property type="entry name" value="PRK01310.1"/>
    <property type="match status" value="1"/>
</dbReference>
<dbReference type="Pfam" id="PF02594">
    <property type="entry name" value="DUF167"/>
    <property type="match status" value="1"/>
</dbReference>
<dbReference type="SMART" id="SM01152">
    <property type="entry name" value="DUF167"/>
    <property type="match status" value="1"/>
</dbReference>
<dbReference type="SUPFAM" id="SSF69786">
    <property type="entry name" value="YggU-like"/>
    <property type="match status" value="1"/>
</dbReference>
<keyword id="KW-1185">Reference proteome</keyword>
<proteinExistence type="inferred from homology"/>
<organism>
    <name type="scientific">Rhizobium etli (strain ATCC 51251 / DSM 11541 / JCM 21823 / NBRC 15573 / CFN 42)</name>
    <dbReference type="NCBI Taxonomy" id="347834"/>
    <lineage>
        <taxon>Bacteria</taxon>
        <taxon>Pseudomonadati</taxon>
        <taxon>Pseudomonadota</taxon>
        <taxon>Alphaproteobacteria</taxon>
        <taxon>Hyphomicrobiales</taxon>
        <taxon>Rhizobiaceae</taxon>
        <taxon>Rhizobium/Agrobacterium group</taxon>
        <taxon>Rhizobium</taxon>
    </lineage>
</organism>
<evidence type="ECO:0000255" key="1">
    <source>
        <dbReference type="HAMAP-Rule" id="MF_00634"/>
    </source>
</evidence>
<accession>Q2K3C8</accession>
<name>Y3912_RHIEC</name>
<reference key="1">
    <citation type="journal article" date="2006" name="Proc. Natl. Acad. Sci. U.S.A.">
        <title>The partitioned Rhizobium etli genome: genetic and metabolic redundancy in seven interacting replicons.</title>
        <authorList>
            <person name="Gonzalez V."/>
            <person name="Santamaria R.I."/>
            <person name="Bustos P."/>
            <person name="Hernandez-Gonzalez I."/>
            <person name="Medrano-Soto A."/>
            <person name="Moreno-Hagelsieb G."/>
            <person name="Janga S.C."/>
            <person name="Ramirez M.A."/>
            <person name="Jimenez-Jacinto V."/>
            <person name="Collado-Vides J."/>
            <person name="Davila G."/>
        </authorList>
    </citation>
    <scope>NUCLEOTIDE SEQUENCE [LARGE SCALE GENOMIC DNA]</scope>
    <source>
        <strain>ATCC 51251 / DSM 11541 / JCM 21823 / NBRC 15573 / CFN 42</strain>
    </source>
</reference>
<feature type="chain" id="PRO_1000061426" description="UPF0235 protein RHE_CH03912">
    <location>
        <begin position="1"/>
        <end position="112"/>
    </location>
</feature>
<protein>
    <recommendedName>
        <fullName evidence="1">UPF0235 protein RHE_CH03912</fullName>
    </recommendedName>
</protein>
<gene>
    <name type="ordered locus">RHE_CH03912</name>
</gene>
<sequence length="112" mass="12064">MDHPLPAGRLSPPWKLFADHLRLTVRLTPNGGRDAFDGIDTDSEGETYLGARVTAVPEKGKANKALIALVSKSVGVAKSSVSVISGETARKKILRIEGDPEDLARKLEVFLE</sequence>
<comment type="similarity">
    <text evidence="1">Belongs to the UPF0235 family.</text>
</comment>